<protein>
    <recommendedName>
        <fullName evidence="1">Disulfide bond formation protein B</fullName>
    </recommendedName>
    <alternativeName>
        <fullName evidence="1">Disulfide oxidoreductase</fullName>
    </alternativeName>
</protein>
<accession>A1KV57</accession>
<proteinExistence type="inferred from homology"/>
<evidence type="ECO:0000255" key="1">
    <source>
        <dbReference type="HAMAP-Rule" id="MF_00286"/>
    </source>
</evidence>
<evidence type="ECO:0000305" key="2"/>
<sequence length="162" mass="17649">MTPLFRKAVWLLFAVSVCAFAGSLAAQYVLGMEPCVLCISQRLCVLATALCTAIVLMCRPRRRAGGLFGAVFISIPAVTGISVAAYQLWLQSLPPGTAPSCGAPWTFRLKGWSLFDWFEPVVRGFGNCAEPDYLLGVALPVWSAAYFLAVVLTVWWAWARAK</sequence>
<reference key="1">
    <citation type="journal article" date="2007" name="PLoS Genet.">
        <title>Meningococcal genetic variation mechanisms viewed through comparative analysis of serogroup C strain FAM18.</title>
        <authorList>
            <person name="Bentley S.D."/>
            <person name="Vernikos G.S."/>
            <person name="Snyder L.A.S."/>
            <person name="Churcher C."/>
            <person name="Arrowsmith C."/>
            <person name="Chillingworth T."/>
            <person name="Cronin A."/>
            <person name="Davis P.H."/>
            <person name="Holroyd N.E."/>
            <person name="Jagels K."/>
            <person name="Maddison M."/>
            <person name="Moule S."/>
            <person name="Rabbinowitsch E."/>
            <person name="Sharp S."/>
            <person name="Unwin L."/>
            <person name="Whitehead S."/>
            <person name="Quail M.A."/>
            <person name="Achtman M."/>
            <person name="Barrell B.G."/>
            <person name="Saunders N.J."/>
            <person name="Parkhill J."/>
        </authorList>
    </citation>
    <scope>NUCLEOTIDE SEQUENCE [LARGE SCALE GENOMIC DNA]</scope>
    <source>
        <strain>ATCC 700532 / DSM 15464 / FAM18</strain>
    </source>
</reference>
<organism>
    <name type="scientific">Neisseria meningitidis serogroup C / serotype 2a (strain ATCC 700532 / DSM 15464 / FAM18)</name>
    <dbReference type="NCBI Taxonomy" id="272831"/>
    <lineage>
        <taxon>Bacteria</taxon>
        <taxon>Pseudomonadati</taxon>
        <taxon>Pseudomonadota</taxon>
        <taxon>Betaproteobacteria</taxon>
        <taxon>Neisseriales</taxon>
        <taxon>Neisseriaceae</taxon>
        <taxon>Neisseria</taxon>
    </lineage>
</organism>
<feature type="chain" id="PRO_0000298372" description="Disulfide bond formation protein B">
    <location>
        <begin position="1"/>
        <end position="162"/>
    </location>
</feature>
<feature type="topological domain" description="Cytoplasmic" evidence="1">
    <location>
        <begin position="1"/>
        <end position="8"/>
    </location>
</feature>
<feature type="transmembrane region" description="Helical" evidence="1">
    <location>
        <begin position="9"/>
        <end position="25"/>
    </location>
</feature>
<feature type="topological domain" description="Periplasmic" evidence="1">
    <location>
        <begin position="26"/>
        <end position="43"/>
    </location>
</feature>
<feature type="transmembrane region" description="Helical" evidence="1">
    <location>
        <begin position="44"/>
        <end position="60"/>
    </location>
</feature>
<feature type="topological domain" description="Cytoplasmic" evidence="1">
    <location>
        <begin position="61"/>
        <end position="67"/>
    </location>
</feature>
<feature type="transmembrane region" description="Helical" evidence="1">
    <location>
        <begin position="68"/>
        <end position="85"/>
    </location>
</feature>
<feature type="topological domain" description="Periplasmic" evidence="1">
    <location>
        <begin position="86"/>
        <end position="141"/>
    </location>
</feature>
<feature type="transmembrane region" description="Helical" evidence="1">
    <location>
        <begin position="142"/>
        <end position="160"/>
    </location>
</feature>
<feature type="topological domain" description="Cytoplasmic" evidence="1">
    <location>
        <begin position="161"/>
        <end position="162"/>
    </location>
</feature>
<feature type="disulfide bond" description="Redox-active" evidence="1">
    <location>
        <begin position="35"/>
        <end position="38"/>
    </location>
</feature>
<feature type="disulfide bond" description="Redox-active" evidence="1">
    <location>
        <begin position="101"/>
        <end position="128"/>
    </location>
</feature>
<dbReference type="EMBL" id="AM421808">
    <property type="protein sequence ID" value="CAM10758.1"/>
    <property type="status" value="ALT_INIT"/>
    <property type="molecule type" value="Genomic_DNA"/>
</dbReference>
<dbReference type="RefSeq" id="WP_002220483.1">
    <property type="nucleotide sequence ID" value="NC_008767.1"/>
</dbReference>
<dbReference type="KEGG" id="nmc:NMC1564"/>
<dbReference type="HOGENOM" id="CLU_098660_1_1_4"/>
<dbReference type="Proteomes" id="UP000002286">
    <property type="component" value="Chromosome"/>
</dbReference>
<dbReference type="GO" id="GO:0005886">
    <property type="term" value="C:plasma membrane"/>
    <property type="evidence" value="ECO:0007669"/>
    <property type="project" value="UniProtKB-SubCell"/>
</dbReference>
<dbReference type="GO" id="GO:0009055">
    <property type="term" value="F:electron transfer activity"/>
    <property type="evidence" value="ECO:0007669"/>
    <property type="project" value="UniProtKB-UniRule"/>
</dbReference>
<dbReference type="GO" id="GO:0015035">
    <property type="term" value="F:protein-disulfide reductase activity"/>
    <property type="evidence" value="ECO:0007669"/>
    <property type="project" value="UniProtKB-UniRule"/>
</dbReference>
<dbReference type="GO" id="GO:0006457">
    <property type="term" value="P:protein folding"/>
    <property type="evidence" value="ECO:0007669"/>
    <property type="project" value="InterPro"/>
</dbReference>
<dbReference type="Gene3D" id="1.20.1550.10">
    <property type="entry name" value="DsbB-like"/>
    <property type="match status" value="1"/>
</dbReference>
<dbReference type="HAMAP" id="MF_00286">
    <property type="entry name" value="DsbB"/>
    <property type="match status" value="1"/>
</dbReference>
<dbReference type="InterPro" id="IPR003752">
    <property type="entry name" value="DiS_bond_form_DsbB/BdbC"/>
</dbReference>
<dbReference type="InterPro" id="IPR022920">
    <property type="entry name" value="Disulphide_bond_form_DsbB"/>
</dbReference>
<dbReference type="InterPro" id="IPR050183">
    <property type="entry name" value="DsbB"/>
</dbReference>
<dbReference type="InterPro" id="IPR023380">
    <property type="entry name" value="DsbB-like_sf"/>
</dbReference>
<dbReference type="PANTHER" id="PTHR36570">
    <property type="entry name" value="DISULFIDE BOND FORMATION PROTEIN B"/>
    <property type="match status" value="1"/>
</dbReference>
<dbReference type="PANTHER" id="PTHR36570:SF3">
    <property type="entry name" value="DISULFIDE BOND FORMATION PROTEIN B"/>
    <property type="match status" value="1"/>
</dbReference>
<dbReference type="Pfam" id="PF02600">
    <property type="entry name" value="DsbB"/>
    <property type="match status" value="1"/>
</dbReference>
<dbReference type="SUPFAM" id="SSF158442">
    <property type="entry name" value="DsbB-like"/>
    <property type="match status" value="1"/>
</dbReference>
<name>DSBB_NEIMF</name>
<comment type="function">
    <text evidence="1">Required for disulfide bond formation in some periplasmic proteins. Acts by oxidizing the DsbA protein.</text>
</comment>
<comment type="subcellular location">
    <subcellularLocation>
        <location evidence="1">Cell inner membrane</location>
        <topology evidence="1">Multi-pass membrane protein</topology>
    </subcellularLocation>
</comment>
<comment type="similarity">
    <text evidence="1">Belongs to the DsbB family.</text>
</comment>
<comment type="sequence caution" evidence="2">
    <conflict type="erroneous initiation">
        <sequence resource="EMBL-CDS" id="CAM10758"/>
    </conflict>
</comment>
<keyword id="KW-0997">Cell inner membrane</keyword>
<keyword id="KW-1003">Cell membrane</keyword>
<keyword id="KW-0143">Chaperone</keyword>
<keyword id="KW-1015">Disulfide bond</keyword>
<keyword id="KW-0249">Electron transport</keyword>
<keyword id="KW-0472">Membrane</keyword>
<keyword id="KW-0560">Oxidoreductase</keyword>
<keyword id="KW-0676">Redox-active center</keyword>
<keyword id="KW-0812">Transmembrane</keyword>
<keyword id="KW-1133">Transmembrane helix</keyword>
<keyword id="KW-0813">Transport</keyword>
<gene>
    <name evidence="1" type="primary">dsbB</name>
    <name type="ordered locus">NMC1564</name>
</gene>